<accession>Q3AAE7</accession>
<feature type="chain" id="PRO_0000242550" description="UDP-N-acetylmuramate--L-alanine ligase">
    <location>
        <begin position="1"/>
        <end position="464"/>
    </location>
</feature>
<feature type="binding site" evidence="1">
    <location>
        <begin position="123"/>
        <end position="129"/>
    </location>
    <ligand>
        <name>ATP</name>
        <dbReference type="ChEBI" id="CHEBI:30616"/>
    </ligand>
</feature>
<evidence type="ECO:0000255" key="1">
    <source>
        <dbReference type="HAMAP-Rule" id="MF_00046"/>
    </source>
</evidence>
<keyword id="KW-0067">ATP-binding</keyword>
<keyword id="KW-0131">Cell cycle</keyword>
<keyword id="KW-0132">Cell division</keyword>
<keyword id="KW-0133">Cell shape</keyword>
<keyword id="KW-0961">Cell wall biogenesis/degradation</keyword>
<keyword id="KW-0963">Cytoplasm</keyword>
<keyword id="KW-0436">Ligase</keyword>
<keyword id="KW-0547">Nucleotide-binding</keyword>
<keyword id="KW-0573">Peptidoglycan synthesis</keyword>
<keyword id="KW-1185">Reference proteome</keyword>
<dbReference type="EC" id="6.3.2.8" evidence="1"/>
<dbReference type="EMBL" id="CP000141">
    <property type="protein sequence ID" value="ABB15630.1"/>
    <property type="molecule type" value="Genomic_DNA"/>
</dbReference>
<dbReference type="SMR" id="Q3AAE7"/>
<dbReference type="FunCoup" id="Q3AAE7">
    <property type="interactions" value="295"/>
</dbReference>
<dbReference type="STRING" id="246194.CHY_2068"/>
<dbReference type="KEGG" id="chy:CHY_2068"/>
<dbReference type="eggNOG" id="COG0773">
    <property type="taxonomic scope" value="Bacteria"/>
</dbReference>
<dbReference type="HOGENOM" id="CLU_028104_2_2_9"/>
<dbReference type="InParanoid" id="Q3AAE7"/>
<dbReference type="OrthoDB" id="9804126at2"/>
<dbReference type="UniPathway" id="UPA00219"/>
<dbReference type="Proteomes" id="UP000002706">
    <property type="component" value="Chromosome"/>
</dbReference>
<dbReference type="GO" id="GO:0005737">
    <property type="term" value="C:cytoplasm"/>
    <property type="evidence" value="ECO:0007669"/>
    <property type="project" value="UniProtKB-SubCell"/>
</dbReference>
<dbReference type="GO" id="GO:0005524">
    <property type="term" value="F:ATP binding"/>
    <property type="evidence" value="ECO:0007669"/>
    <property type="project" value="UniProtKB-UniRule"/>
</dbReference>
<dbReference type="GO" id="GO:0008763">
    <property type="term" value="F:UDP-N-acetylmuramate-L-alanine ligase activity"/>
    <property type="evidence" value="ECO:0007669"/>
    <property type="project" value="UniProtKB-UniRule"/>
</dbReference>
<dbReference type="GO" id="GO:0051301">
    <property type="term" value="P:cell division"/>
    <property type="evidence" value="ECO:0007669"/>
    <property type="project" value="UniProtKB-KW"/>
</dbReference>
<dbReference type="GO" id="GO:0071555">
    <property type="term" value="P:cell wall organization"/>
    <property type="evidence" value="ECO:0007669"/>
    <property type="project" value="UniProtKB-KW"/>
</dbReference>
<dbReference type="GO" id="GO:0009252">
    <property type="term" value="P:peptidoglycan biosynthetic process"/>
    <property type="evidence" value="ECO:0007669"/>
    <property type="project" value="UniProtKB-UniRule"/>
</dbReference>
<dbReference type="GO" id="GO:0008360">
    <property type="term" value="P:regulation of cell shape"/>
    <property type="evidence" value="ECO:0007669"/>
    <property type="project" value="UniProtKB-KW"/>
</dbReference>
<dbReference type="Gene3D" id="3.90.190.20">
    <property type="entry name" value="Mur ligase, C-terminal domain"/>
    <property type="match status" value="1"/>
</dbReference>
<dbReference type="Gene3D" id="3.40.1190.10">
    <property type="entry name" value="Mur-like, catalytic domain"/>
    <property type="match status" value="1"/>
</dbReference>
<dbReference type="Gene3D" id="3.40.50.720">
    <property type="entry name" value="NAD(P)-binding Rossmann-like Domain"/>
    <property type="match status" value="1"/>
</dbReference>
<dbReference type="HAMAP" id="MF_00046">
    <property type="entry name" value="MurC"/>
    <property type="match status" value="1"/>
</dbReference>
<dbReference type="InterPro" id="IPR036565">
    <property type="entry name" value="Mur-like_cat_sf"/>
</dbReference>
<dbReference type="InterPro" id="IPR004101">
    <property type="entry name" value="Mur_ligase_C"/>
</dbReference>
<dbReference type="InterPro" id="IPR036615">
    <property type="entry name" value="Mur_ligase_C_dom_sf"/>
</dbReference>
<dbReference type="InterPro" id="IPR013221">
    <property type="entry name" value="Mur_ligase_cen"/>
</dbReference>
<dbReference type="InterPro" id="IPR000713">
    <property type="entry name" value="Mur_ligase_N"/>
</dbReference>
<dbReference type="InterPro" id="IPR050061">
    <property type="entry name" value="MurCDEF_pg_biosynth"/>
</dbReference>
<dbReference type="InterPro" id="IPR005758">
    <property type="entry name" value="UDP-N-AcMur_Ala_ligase_MurC"/>
</dbReference>
<dbReference type="NCBIfam" id="TIGR01082">
    <property type="entry name" value="murC"/>
    <property type="match status" value="1"/>
</dbReference>
<dbReference type="PANTHER" id="PTHR43445:SF3">
    <property type="entry name" value="UDP-N-ACETYLMURAMATE--L-ALANINE LIGASE"/>
    <property type="match status" value="1"/>
</dbReference>
<dbReference type="PANTHER" id="PTHR43445">
    <property type="entry name" value="UDP-N-ACETYLMURAMATE--L-ALANINE LIGASE-RELATED"/>
    <property type="match status" value="1"/>
</dbReference>
<dbReference type="Pfam" id="PF01225">
    <property type="entry name" value="Mur_ligase"/>
    <property type="match status" value="1"/>
</dbReference>
<dbReference type="Pfam" id="PF02875">
    <property type="entry name" value="Mur_ligase_C"/>
    <property type="match status" value="1"/>
</dbReference>
<dbReference type="Pfam" id="PF08245">
    <property type="entry name" value="Mur_ligase_M"/>
    <property type="match status" value="1"/>
</dbReference>
<dbReference type="SUPFAM" id="SSF51984">
    <property type="entry name" value="MurCD N-terminal domain"/>
    <property type="match status" value="1"/>
</dbReference>
<dbReference type="SUPFAM" id="SSF53623">
    <property type="entry name" value="MurD-like peptide ligases, catalytic domain"/>
    <property type="match status" value="1"/>
</dbReference>
<dbReference type="SUPFAM" id="SSF53244">
    <property type="entry name" value="MurD-like peptide ligases, peptide-binding domain"/>
    <property type="match status" value="1"/>
</dbReference>
<comment type="function">
    <text evidence="1">Cell wall formation.</text>
</comment>
<comment type="catalytic activity">
    <reaction evidence="1">
        <text>UDP-N-acetyl-alpha-D-muramate + L-alanine + ATP = UDP-N-acetyl-alpha-D-muramoyl-L-alanine + ADP + phosphate + H(+)</text>
        <dbReference type="Rhea" id="RHEA:23372"/>
        <dbReference type="ChEBI" id="CHEBI:15378"/>
        <dbReference type="ChEBI" id="CHEBI:30616"/>
        <dbReference type="ChEBI" id="CHEBI:43474"/>
        <dbReference type="ChEBI" id="CHEBI:57972"/>
        <dbReference type="ChEBI" id="CHEBI:70757"/>
        <dbReference type="ChEBI" id="CHEBI:83898"/>
        <dbReference type="ChEBI" id="CHEBI:456216"/>
        <dbReference type="EC" id="6.3.2.8"/>
    </reaction>
</comment>
<comment type="pathway">
    <text evidence="1">Cell wall biogenesis; peptidoglycan biosynthesis.</text>
</comment>
<comment type="subcellular location">
    <subcellularLocation>
        <location evidence="1">Cytoplasm</location>
    </subcellularLocation>
</comment>
<comment type="similarity">
    <text evidence="1">Belongs to the MurCDEF family.</text>
</comment>
<gene>
    <name evidence="1" type="primary">murC</name>
    <name type="ordered locus">CHY_2068</name>
</gene>
<name>MURC_CARHZ</name>
<sequence length="464" mass="51804">MAYYSTVLKRKVRKMLAVHFIAIGGIGMSGLARILQSKGYRVSGSDLKETELTKKLRAEGITVFIGHREENLASDVSLVVVSTAVSQDNPELLKAKRLGIPVMHRGELLARLMQEKKGIAVAGTHGKTTTSSMIAYVLEKEGFDPVIAVGGEIVDLGYNAKAGQGEYMVAEADESDGSFLKLLPYAAVITNIEADHLDYYQSFEEIKKAFKKFADNIRPEGFGVFCWDNLQVREMLKGYKKRKFTYGFSPGSDFMLRDYREEQNQLVANIYYKNTLEGELRLKVPGKHNILNAAAATAVLRNIGLSFKAISERLLEFNGAKRRFQILGERNGALIVDDYAHHPTEVEATLRAAKLYKDRDVLVVFQPHRYTRTHFFYKEFARVLVDAEKVVLTGIYSAGEKPIPGVSGEMIAEEMKKLGKNPLYLESLDEVYNYLEQNLKPGLLVLLLGAGNINQVGYKLLGKA</sequence>
<protein>
    <recommendedName>
        <fullName evidence="1">UDP-N-acetylmuramate--L-alanine ligase</fullName>
        <ecNumber evidence="1">6.3.2.8</ecNumber>
    </recommendedName>
    <alternativeName>
        <fullName evidence="1">UDP-N-acetylmuramoyl-L-alanine synthetase</fullName>
    </alternativeName>
</protein>
<proteinExistence type="inferred from homology"/>
<reference key="1">
    <citation type="journal article" date="2005" name="PLoS Genet.">
        <title>Life in hot carbon monoxide: the complete genome sequence of Carboxydothermus hydrogenoformans Z-2901.</title>
        <authorList>
            <person name="Wu M."/>
            <person name="Ren Q."/>
            <person name="Durkin A.S."/>
            <person name="Daugherty S.C."/>
            <person name="Brinkac L.M."/>
            <person name="Dodson R.J."/>
            <person name="Madupu R."/>
            <person name="Sullivan S.A."/>
            <person name="Kolonay J.F."/>
            <person name="Nelson W.C."/>
            <person name="Tallon L.J."/>
            <person name="Jones K.M."/>
            <person name="Ulrich L.E."/>
            <person name="Gonzalez J.M."/>
            <person name="Zhulin I.B."/>
            <person name="Robb F.T."/>
            <person name="Eisen J.A."/>
        </authorList>
    </citation>
    <scope>NUCLEOTIDE SEQUENCE [LARGE SCALE GENOMIC DNA]</scope>
    <source>
        <strain>ATCC BAA-161 / DSM 6008 / Z-2901</strain>
    </source>
</reference>
<organism>
    <name type="scientific">Carboxydothermus hydrogenoformans (strain ATCC BAA-161 / DSM 6008 / Z-2901)</name>
    <dbReference type="NCBI Taxonomy" id="246194"/>
    <lineage>
        <taxon>Bacteria</taxon>
        <taxon>Bacillati</taxon>
        <taxon>Bacillota</taxon>
        <taxon>Clostridia</taxon>
        <taxon>Thermoanaerobacterales</taxon>
        <taxon>Thermoanaerobacteraceae</taxon>
        <taxon>Carboxydothermus</taxon>
    </lineage>
</organism>